<gene>
    <name type="primary">PCL6</name>
    <name type="ordered locus">YER059W</name>
</gene>
<keyword id="KW-0119">Carbohydrate metabolism</keyword>
<keyword id="KW-0195">Cyclin</keyword>
<keyword id="KW-0963">Cytoplasm</keyword>
<keyword id="KW-0321">Glycogen metabolism</keyword>
<keyword id="KW-0539">Nucleus</keyword>
<keyword id="KW-0597">Phosphoprotein</keyword>
<keyword id="KW-1185">Reference proteome</keyword>
<feature type="chain" id="PRO_0000202631" description="PHO85 cyclin-6">
    <location>
        <begin position="1"/>
        <end position="420"/>
    </location>
</feature>
<feature type="region of interest" description="Disordered" evidence="1">
    <location>
        <begin position="1"/>
        <end position="82"/>
    </location>
</feature>
<feature type="region of interest" description="Disordered" evidence="1">
    <location>
        <begin position="134"/>
        <end position="155"/>
    </location>
</feature>
<feature type="region of interest" description="Disordered" evidence="1">
    <location>
        <begin position="268"/>
        <end position="321"/>
    </location>
</feature>
<feature type="compositionally biased region" description="Low complexity" evidence="1">
    <location>
        <begin position="7"/>
        <end position="22"/>
    </location>
</feature>
<feature type="compositionally biased region" description="Polar residues" evidence="1">
    <location>
        <begin position="134"/>
        <end position="143"/>
    </location>
</feature>
<feature type="compositionally biased region" description="Basic and acidic residues" evidence="1">
    <location>
        <begin position="277"/>
        <end position="296"/>
    </location>
</feature>
<feature type="compositionally biased region" description="Acidic residues" evidence="1">
    <location>
        <begin position="307"/>
        <end position="316"/>
    </location>
</feature>
<feature type="modified residue" description="Phosphoserine" evidence="13">
    <location>
        <position position="61"/>
    </location>
</feature>
<feature type="modified residue" description="Phosphoserine" evidence="13">
    <location>
        <position position="281"/>
    </location>
</feature>
<feature type="modified residue" description="Phosphoserine" evidence="13 14">
    <location>
        <position position="312"/>
    </location>
</feature>
<feature type="modified residue" description="Phosphothreonine" evidence="14">
    <location>
        <position position="317"/>
    </location>
</feature>
<name>PCL6_YEAST</name>
<organism>
    <name type="scientific">Saccharomyces cerevisiae (strain ATCC 204508 / S288c)</name>
    <name type="common">Baker's yeast</name>
    <dbReference type="NCBI Taxonomy" id="559292"/>
    <lineage>
        <taxon>Eukaryota</taxon>
        <taxon>Fungi</taxon>
        <taxon>Dikarya</taxon>
        <taxon>Ascomycota</taxon>
        <taxon>Saccharomycotina</taxon>
        <taxon>Saccharomycetes</taxon>
        <taxon>Saccharomycetales</taxon>
        <taxon>Saccharomycetaceae</taxon>
        <taxon>Saccharomyces</taxon>
    </lineage>
</organism>
<comment type="function">
    <text evidence="4 5 6 7 10">Cyclin partner of the cyclin-dependent kinase (CDK) PHO85. Together with cyclin PCL7, controls glycogen phosphorylase and glycogen synthase activities in response to nutrient availablility. The PCL6-PHO85 cyclin-CDK holoenzyme has GLC8 kinase activity and phosphorylates and inactivates the phosphatase PP1-2 inhibitor GLC8, causing activation of PP1-2, which then dephosphorylates and activates glycogen phosphorylase. PCL6-PHO85 also phosphorylates YJL084C.</text>
</comment>
<comment type="subunit">
    <text evidence="2 3 6 11">Forms a cyclin-CDK complex with PHO85. Interacts with the substrate protein YJL084C. Interacts with elongin-C, which stabilizes PCL6. Interacts with the CDK inhibitor (CKI) PHO81.</text>
</comment>
<comment type="interaction">
    <interactant intactId="EBI-22555">
        <id>P40038</id>
    </interactant>
    <interactant intactId="EBI-13327">
        <id>P17157</id>
        <label>PHO85</label>
    </interactant>
    <organismsDiffer>false</organismsDiffer>
    <experiments>8</experiments>
</comment>
<comment type="subcellular location">
    <subcellularLocation>
        <location evidence="8">Cytoplasm</location>
    </subcellularLocation>
    <subcellularLocation>
        <location evidence="8">Nucleus</location>
    </subcellularLocation>
</comment>
<comment type="miscellaneous">
    <text evidence="9">Present with 1240 molecules/cell in log phase SD medium.</text>
</comment>
<comment type="similarity">
    <text evidence="12">Belongs to the cyclin family. PHO80 subfamily.</text>
</comment>
<sequence length="420" mass="47007">MSIKGDSPSSTNASSSPKSTYSIQSDDKANLGSGNVDIRTDNSQQDSNNRRDIVVVTRVASEETLESQSSTSSMGIRPESSFNYEDASNQARVEMNNRVHGSNMNTINKYYPVRFPKNNERQLSDTNNLNEKVQGTHTVQSSTQEDKILDGDTSNSQVTPSLNIAEFPTDKLLKMLTALLTKIIKSNDRTAATNPSLTQEIENGRCLALSDNEKKYLSPVLGFRGKHVPQIGLDQYFQRIQKYCPTTNDVFLSLLVYFDRISKRCNSVTTTPKTNTAKHESPSNESSLDKANRGADKMSACNSNENNENDDSDDENTGVQRDSRAHPQMFVMDSHNIHRLIIAGITVSTKFLSDFFYSNSRYSRVGGISLQELNHLELQFLVLCDFELLISVNELQRYADLLYRFWNNAKAQSQALVTGM</sequence>
<accession>P40038</accession>
<accession>D3DLW3</accession>
<proteinExistence type="evidence at protein level"/>
<dbReference type="EMBL" id="U18813">
    <property type="protein sequence ID" value="AAB64595.1"/>
    <property type="molecule type" value="Genomic_DNA"/>
</dbReference>
<dbReference type="EMBL" id="BK006939">
    <property type="protein sequence ID" value="DAA07717.1"/>
    <property type="molecule type" value="Genomic_DNA"/>
</dbReference>
<dbReference type="PIR" id="S50562">
    <property type="entry name" value="S50562"/>
</dbReference>
<dbReference type="RefSeq" id="NP_010980.1">
    <property type="nucleotide sequence ID" value="NM_001178950.1"/>
</dbReference>
<dbReference type="SMR" id="P40038"/>
<dbReference type="BioGRID" id="36800">
    <property type="interactions" value="83"/>
</dbReference>
<dbReference type="ComplexPortal" id="CPX-1689">
    <property type="entry name" value="PCL6-PHO85 kinase complex"/>
</dbReference>
<dbReference type="DIP" id="DIP-1496N"/>
<dbReference type="FunCoup" id="P40038">
    <property type="interactions" value="174"/>
</dbReference>
<dbReference type="IntAct" id="P40038">
    <property type="interactions" value="26"/>
</dbReference>
<dbReference type="MINT" id="P40038"/>
<dbReference type="STRING" id="4932.YER059W"/>
<dbReference type="GlyGen" id="P40038">
    <property type="glycosylation" value="2 sites, 1 O-linked glycan (1 site)"/>
</dbReference>
<dbReference type="iPTMnet" id="P40038"/>
<dbReference type="PaxDb" id="4932-YER059W"/>
<dbReference type="PeptideAtlas" id="P40038"/>
<dbReference type="EnsemblFungi" id="YER059W_mRNA">
    <property type="protein sequence ID" value="YER059W"/>
    <property type="gene ID" value="YER059W"/>
</dbReference>
<dbReference type="GeneID" id="856787"/>
<dbReference type="KEGG" id="sce:YER059W"/>
<dbReference type="AGR" id="SGD:S000000861"/>
<dbReference type="SGD" id="S000000861">
    <property type="gene designation" value="PCL6"/>
</dbReference>
<dbReference type="VEuPathDB" id="FungiDB:YER059W"/>
<dbReference type="eggNOG" id="KOG1674">
    <property type="taxonomic scope" value="Eukaryota"/>
</dbReference>
<dbReference type="GeneTree" id="ENSGT00390000000862"/>
<dbReference type="HOGENOM" id="CLU_048130_1_0_1"/>
<dbReference type="InParanoid" id="P40038"/>
<dbReference type="OMA" id="QSSTQXD"/>
<dbReference type="OrthoDB" id="1060854at2759"/>
<dbReference type="BioCyc" id="YEAST:G3O-30236-MONOMER"/>
<dbReference type="BioGRID-ORCS" id="856787">
    <property type="hits" value="6 hits in 10 CRISPR screens"/>
</dbReference>
<dbReference type="PRO" id="PR:P40038"/>
<dbReference type="Proteomes" id="UP000002311">
    <property type="component" value="Chromosome V"/>
</dbReference>
<dbReference type="RNAct" id="P40038">
    <property type="molecule type" value="protein"/>
</dbReference>
<dbReference type="GO" id="GO:0000307">
    <property type="term" value="C:cyclin-dependent protein kinase holoenzyme complex"/>
    <property type="evidence" value="ECO:0000353"/>
    <property type="project" value="ComplexPortal"/>
</dbReference>
<dbReference type="GO" id="GO:0005737">
    <property type="term" value="C:cytoplasm"/>
    <property type="evidence" value="ECO:0007669"/>
    <property type="project" value="UniProtKB-SubCell"/>
</dbReference>
<dbReference type="GO" id="GO:0005634">
    <property type="term" value="C:nucleus"/>
    <property type="evidence" value="ECO:0000318"/>
    <property type="project" value="GO_Central"/>
</dbReference>
<dbReference type="GO" id="GO:0016538">
    <property type="term" value="F:cyclin-dependent protein serine/threonine kinase regulator activity"/>
    <property type="evidence" value="ECO:0000318"/>
    <property type="project" value="GO_Central"/>
</dbReference>
<dbReference type="GO" id="GO:0019901">
    <property type="term" value="F:protein kinase binding"/>
    <property type="evidence" value="ECO:0007669"/>
    <property type="project" value="InterPro"/>
</dbReference>
<dbReference type="GO" id="GO:0005977">
    <property type="term" value="P:glycogen metabolic process"/>
    <property type="evidence" value="ECO:0007669"/>
    <property type="project" value="UniProtKB-KW"/>
</dbReference>
<dbReference type="GO" id="GO:0005979">
    <property type="term" value="P:regulation of glycogen biosynthetic process"/>
    <property type="evidence" value="ECO:0000316"/>
    <property type="project" value="SGD"/>
</dbReference>
<dbReference type="GO" id="GO:0005981">
    <property type="term" value="P:regulation of glycogen catabolic process"/>
    <property type="evidence" value="ECO:0000316"/>
    <property type="project" value="SGD"/>
</dbReference>
<dbReference type="CDD" id="cd20558">
    <property type="entry name" value="CYCLIN_ScPCL7-like"/>
    <property type="match status" value="1"/>
</dbReference>
<dbReference type="Gene3D" id="1.10.472.10">
    <property type="entry name" value="Cyclin-like"/>
    <property type="match status" value="1"/>
</dbReference>
<dbReference type="InterPro" id="IPR013922">
    <property type="entry name" value="Cyclin_PHO80-like"/>
</dbReference>
<dbReference type="PANTHER" id="PTHR15615">
    <property type="match status" value="1"/>
</dbReference>
<dbReference type="PANTHER" id="PTHR15615:SF94">
    <property type="entry name" value="PHO85 CYCLIN-6-RELATED"/>
    <property type="match status" value="1"/>
</dbReference>
<dbReference type="Pfam" id="PF08613">
    <property type="entry name" value="Cyclin"/>
    <property type="match status" value="2"/>
</dbReference>
<protein>
    <recommendedName>
        <fullName>PHO85 cyclin-6</fullName>
    </recommendedName>
</protein>
<evidence type="ECO:0000256" key="1">
    <source>
        <dbReference type="SAM" id="MobiDB-lite"/>
    </source>
</evidence>
<evidence type="ECO:0000269" key="2">
    <source>
    </source>
</evidence>
<evidence type="ECO:0000269" key="3">
    <source>
    </source>
</evidence>
<evidence type="ECO:0000269" key="4">
    <source>
    </source>
</evidence>
<evidence type="ECO:0000269" key="5">
    <source>
    </source>
</evidence>
<evidence type="ECO:0000269" key="6">
    <source>
    </source>
</evidence>
<evidence type="ECO:0000269" key="7">
    <source>
    </source>
</evidence>
<evidence type="ECO:0000269" key="8">
    <source>
    </source>
</evidence>
<evidence type="ECO:0000269" key="9">
    <source>
    </source>
</evidence>
<evidence type="ECO:0000269" key="10">
    <source>
    </source>
</evidence>
<evidence type="ECO:0000269" key="11">
    <source>
    </source>
</evidence>
<evidence type="ECO:0000305" key="12"/>
<evidence type="ECO:0007744" key="13">
    <source>
    </source>
</evidence>
<evidence type="ECO:0007744" key="14">
    <source>
    </source>
</evidence>
<reference key="1">
    <citation type="journal article" date="1997" name="Nature">
        <title>The nucleotide sequence of Saccharomyces cerevisiae chromosome V.</title>
        <authorList>
            <person name="Dietrich F.S."/>
            <person name="Mulligan J.T."/>
            <person name="Hennessy K.M."/>
            <person name="Yelton M.A."/>
            <person name="Allen E."/>
            <person name="Araujo R."/>
            <person name="Aviles E."/>
            <person name="Berno A."/>
            <person name="Brennan T."/>
            <person name="Carpenter J."/>
            <person name="Chen E."/>
            <person name="Cherry J.M."/>
            <person name="Chung E."/>
            <person name="Duncan M."/>
            <person name="Guzman E."/>
            <person name="Hartzell G."/>
            <person name="Hunicke-Smith S."/>
            <person name="Hyman R.W."/>
            <person name="Kayser A."/>
            <person name="Komp C."/>
            <person name="Lashkari D."/>
            <person name="Lew H."/>
            <person name="Lin D."/>
            <person name="Mosedale D."/>
            <person name="Nakahara K."/>
            <person name="Namath A."/>
            <person name="Norgren R."/>
            <person name="Oefner P."/>
            <person name="Oh C."/>
            <person name="Petel F.X."/>
            <person name="Roberts D."/>
            <person name="Sehl P."/>
            <person name="Schramm S."/>
            <person name="Shogren T."/>
            <person name="Smith V."/>
            <person name="Taylor P."/>
            <person name="Wei Y."/>
            <person name="Botstein D."/>
            <person name="Davis R.W."/>
        </authorList>
    </citation>
    <scope>NUCLEOTIDE SEQUENCE [LARGE SCALE GENOMIC DNA]</scope>
    <source>
        <strain>ATCC 204508 / S288c</strain>
    </source>
</reference>
<reference key="2">
    <citation type="journal article" date="2014" name="G3 (Bethesda)">
        <title>The reference genome sequence of Saccharomyces cerevisiae: Then and now.</title>
        <authorList>
            <person name="Engel S.R."/>
            <person name="Dietrich F.S."/>
            <person name="Fisk D.G."/>
            <person name="Binkley G."/>
            <person name="Balakrishnan R."/>
            <person name="Costanzo M.C."/>
            <person name="Dwight S.S."/>
            <person name="Hitz B.C."/>
            <person name="Karra K."/>
            <person name="Nash R.S."/>
            <person name="Weng S."/>
            <person name="Wong E.D."/>
            <person name="Lloyd P."/>
            <person name="Skrzypek M.S."/>
            <person name="Miyasato S.R."/>
            <person name="Simison M."/>
            <person name="Cherry J.M."/>
        </authorList>
    </citation>
    <scope>GENOME REANNOTATION</scope>
    <source>
        <strain>ATCC 204508 / S288c</strain>
    </source>
</reference>
<reference key="3">
    <citation type="journal article" date="1997" name="Mol. Cell. Biol.">
        <title>A family of cyclin-like proteins that interact with the Pho85 cyclin-dependent kinase.</title>
        <authorList>
            <person name="Measday V."/>
            <person name="Moore L."/>
            <person name="Retnakaran R."/>
            <person name="Lee J."/>
            <person name="Donoviel M."/>
            <person name="Neiman A.M."/>
            <person name="Andrews B.J."/>
        </authorList>
    </citation>
    <scope>INTERACTION WITH PHO85</scope>
</reference>
<reference key="4">
    <citation type="journal article" date="2000" name="Biochim. Biophys. Acta">
        <title>Novel roles for elongin C in yeast.</title>
        <authorList>
            <person name="Jackson T."/>
            <person name="Kwon E."/>
            <person name="Chachulska A.M."/>
            <person name="Hyman L.E."/>
        </authorList>
    </citation>
    <scope>INTERACTION WITH ELC1</scope>
</reference>
<reference key="5">
    <citation type="journal article" date="2000" name="Mol. Microbiol.">
        <title>Regulation of the Pcl7-Pho85 cyclin-cdk complex by Pho81.</title>
        <authorList>
            <person name="Lee M."/>
            <person name="O'Regan S."/>
            <person name="Moreau J.-L."/>
            <person name="Johnson A.L."/>
            <person name="Johnston L.H."/>
            <person name="Goding C.R."/>
        </authorList>
    </citation>
    <scope>ACTIVITY REGULATION</scope>
    <scope>INTERACTION WITH PHO81 AND PHO85</scope>
</reference>
<reference key="6">
    <citation type="journal article" date="2001" name="FEBS Lett.">
        <title>The yeast cyclins Pcl6p and Pcl7p are involved in the control of glycogen storage by the cyclin-dependent protein kinase Pho85p.</title>
        <authorList>
            <person name="Wang Z."/>
            <person name="Wilson W.A."/>
            <person name="Fujino M.A."/>
            <person name="Roach P.J."/>
        </authorList>
    </citation>
    <scope>FUNCTION</scope>
</reference>
<reference key="7">
    <citation type="journal article" date="2002" name="Sheng Wu Hua Xue Yu Sheng Wu Wu Li Xue Bao">
        <title>Analysis of phosphorylation of YJL084c, a yeast protein.</title>
        <authorList>
            <person name="Shi X.Z."/>
            <person name="Ao S.Z."/>
        </authorList>
    </citation>
    <scope>FUNCTION</scope>
    <scope>INTERACTION WITH YJL084C</scope>
    <scope>PHOSPHORYLATION OF YJL084C</scope>
</reference>
<reference key="8">
    <citation type="journal article" date="2002" name="J. Biol. Chem.">
        <title>Binding to Elongin C inhibits degradation of interacting proteins in yeast.</title>
        <authorList>
            <person name="Hyman L.E."/>
            <person name="Kwon E."/>
            <person name="Ghosh S."/>
            <person name="McGee J."/>
            <person name="Chachulska A.M."/>
            <person name="Jackson T."/>
            <person name="Baricos W.H."/>
        </authorList>
    </citation>
    <scope>FUNCTION</scope>
</reference>
<reference key="9">
    <citation type="journal article" date="2003" name="J. Biol. Chem.">
        <title>Pho85 phosphorylates the Glc7 protein phosphatase regulator Glc8 in vivo.</title>
        <authorList>
            <person name="Tan Y.S.H."/>
            <person name="Morcos P.A."/>
            <person name="Cannon J.F."/>
        </authorList>
    </citation>
    <scope>FUNCTION</scope>
    <scope>PHOSPHORYLATION OF GLC8</scope>
</reference>
<reference key="10">
    <citation type="journal article" date="2003" name="Nature">
        <title>Global analysis of protein localization in budding yeast.</title>
        <authorList>
            <person name="Huh W.-K."/>
            <person name="Falvo J.V."/>
            <person name="Gerke L.C."/>
            <person name="Carroll A.S."/>
            <person name="Howson R.W."/>
            <person name="Weissman J.S."/>
            <person name="O'Shea E.K."/>
        </authorList>
    </citation>
    <scope>SUBCELLULAR LOCATION [LARGE SCALE ANALYSIS]</scope>
</reference>
<reference key="11">
    <citation type="journal article" date="2003" name="Nature">
        <title>Global analysis of protein expression in yeast.</title>
        <authorList>
            <person name="Ghaemmaghami S."/>
            <person name="Huh W.-K."/>
            <person name="Bower K."/>
            <person name="Howson R.W."/>
            <person name="Belle A."/>
            <person name="Dephoure N."/>
            <person name="O'Shea E.K."/>
            <person name="Weissman J.S."/>
        </authorList>
    </citation>
    <scope>LEVEL OF PROTEIN EXPRESSION [LARGE SCALE ANALYSIS]</scope>
</reference>
<reference key="12">
    <citation type="journal article" date="2005" name="Biochem. Biophys. Res. Commun.">
        <title>Regulation of yeast glycogen phosphorylase by the cyclin-dependent protein kinase Pho85p.</title>
        <authorList>
            <person name="Wilson W.A."/>
            <person name="Wang Z."/>
            <person name="Roach P.J."/>
        </authorList>
    </citation>
    <scope>FUNCTION</scope>
</reference>
<reference key="13">
    <citation type="journal article" date="2008" name="Mol. Cell. Proteomics">
        <title>A multidimensional chromatography technology for in-depth phosphoproteome analysis.</title>
        <authorList>
            <person name="Albuquerque C.P."/>
            <person name="Smolka M.B."/>
            <person name="Payne S.H."/>
            <person name="Bafna V."/>
            <person name="Eng J."/>
            <person name="Zhou H."/>
        </authorList>
    </citation>
    <scope>PHOSPHORYLATION [LARGE SCALE ANALYSIS] AT SER-61; SER-281 AND SER-312</scope>
    <scope>IDENTIFICATION BY MASS SPECTROMETRY [LARGE SCALE ANALYSIS]</scope>
</reference>
<reference key="14">
    <citation type="journal article" date="2009" name="Science">
        <title>Global analysis of Cdk1 substrate phosphorylation sites provides insights into evolution.</title>
        <authorList>
            <person name="Holt L.J."/>
            <person name="Tuch B.B."/>
            <person name="Villen J."/>
            <person name="Johnson A.D."/>
            <person name="Gygi S.P."/>
            <person name="Morgan D.O."/>
        </authorList>
    </citation>
    <scope>PHOSPHORYLATION [LARGE SCALE ANALYSIS] AT SER-312 AND THR-317</scope>
    <scope>IDENTIFICATION BY MASS SPECTROMETRY [LARGE SCALE ANALYSIS]</scope>
</reference>